<feature type="chain" id="PRO_0000153903" description="Putative adenylate kinase">
    <location>
        <begin position="1"/>
        <end position="178"/>
    </location>
</feature>
<feature type="region of interest" description="NMP" evidence="1">
    <location>
        <begin position="29"/>
        <end position="50"/>
    </location>
</feature>
<feature type="region of interest" description="LID" evidence="1">
    <location>
        <begin position="94"/>
        <end position="104"/>
    </location>
</feature>
<feature type="binding site" evidence="1">
    <location>
        <position position="10"/>
    </location>
    <ligand>
        <name>ATP</name>
        <dbReference type="ChEBI" id="CHEBI:30616"/>
    </ligand>
</feature>
<feature type="binding site" evidence="1">
    <location>
        <position position="12"/>
    </location>
    <ligand>
        <name>ATP</name>
        <dbReference type="ChEBI" id="CHEBI:30616"/>
    </ligand>
</feature>
<feature type="binding site" evidence="1">
    <location>
        <position position="13"/>
    </location>
    <ligand>
        <name>ATP</name>
        <dbReference type="ChEBI" id="CHEBI:30616"/>
    </ligand>
</feature>
<feature type="binding site" evidence="1">
    <location>
        <position position="14"/>
    </location>
    <ligand>
        <name>ATP</name>
        <dbReference type="ChEBI" id="CHEBI:30616"/>
    </ligand>
</feature>
<feature type="binding site" evidence="1">
    <location>
        <position position="15"/>
    </location>
    <ligand>
        <name>ATP</name>
        <dbReference type="ChEBI" id="CHEBI:30616"/>
    </ligand>
</feature>
<feature type="binding site" evidence="1">
    <location>
        <position position="95"/>
    </location>
    <ligand>
        <name>ATP</name>
        <dbReference type="ChEBI" id="CHEBI:30616"/>
    </ligand>
</feature>
<keyword id="KW-0067">ATP-binding</keyword>
<keyword id="KW-0418">Kinase</keyword>
<keyword id="KW-0547">Nucleotide-binding</keyword>
<keyword id="KW-1185">Reference proteome</keyword>
<keyword id="KW-0690">Ribosome biogenesis</keyword>
<keyword id="KW-0698">rRNA processing</keyword>
<keyword id="KW-0808">Transferase</keyword>
<protein>
    <recommendedName>
        <fullName evidence="1">Putative adenylate kinase</fullName>
        <shortName evidence="1">AK</shortName>
        <ecNumber evidence="1">2.7.4.3</ecNumber>
    </recommendedName>
    <alternativeName>
        <fullName evidence="1">ATP-AMP transphosphorylase</fullName>
    </alternativeName>
</protein>
<sequence>MLIALTGTPGTGKSSVAERLRERGYKVATVVELAEKHGCIIDEEDGEIVIDVESLAARIDFEGIVEGHLSHLLKPDVAIVLRCNPAVLRERLKGRNWSEEKLLENLEAEMLDVILVEALEHASEVYEIDTTEMSLEEVIEAVEAIIRGDREARKRYKPGGIDWLSELEDRIEEFMRKV</sequence>
<proteinExistence type="inferred from homology"/>
<comment type="function">
    <text evidence="1">Broad-specificity nucleoside monophosphate (NMP) kinase that catalyzes the reversible transfer of the terminal phosphate group between nucleoside triphosphates and monophosphates. Also has ATPase activity. Involved in the late maturation steps of the 30S ribosomal particles, specifically 16S rRNA maturation. While NMP activity is not required for ribosome maturation, ATPase activity is. Associates transiently with small ribosomal subunit protein uS11. ATP hydrolysis breaks the interaction with uS11. May temporarily remove uS11 from the ribosome to enable a conformational change of the ribosomal RNA that is needed for the final maturation step of the small ribosomal subunit.</text>
</comment>
<comment type="catalytic activity">
    <reaction evidence="1">
        <text>AMP + ATP = 2 ADP</text>
        <dbReference type="Rhea" id="RHEA:12973"/>
        <dbReference type="ChEBI" id="CHEBI:30616"/>
        <dbReference type="ChEBI" id="CHEBI:456215"/>
        <dbReference type="ChEBI" id="CHEBI:456216"/>
        <dbReference type="EC" id="2.7.4.3"/>
    </reaction>
</comment>
<comment type="catalytic activity">
    <reaction evidence="1">
        <text>ATP + H2O = ADP + phosphate + H(+)</text>
        <dbReference type="Rhea" id="RHEA:13065"/>
        <dbReference type="ChEBI" id="CHEBI:15377"/>
        <dbReference type="ChEBI" id="CHEBI:15378"/>
        <dbReference type="ChEBI" id="CHEBI:30616"/>
        <dbReference type="ChEBI" id="CHEBI:43474"/>
        <dbReference type="ChEBI" id="CHEBI:456216"/>
    </reaction>
</comment>
<comment type="subunit">
    <text evidence="1">Interacts with uS11. Not a structural component of 40S pre-ribosomes, but transiently interacts with them by binding to uS11.</text>
</comment>
<comment type="similarity">
    <text evidence="1">Belongs to the adenylate kinase family. AK6 subfamily.</text>
</comment>
<name>KAD6_ARCFU</name>
<evidence type="ECO:0000255" key="1">
    <source>
        <dbReference type="HAMAP-Rule" id="MF_00039"/>
    </source>
</evidence>
<organism>
    <name type="scientific">Archaeoglobus fulgidus (strain ATCC 49558 / DSM 4304 / JCM 9628 / NBRC 100126 / VC-16)</name>
    <dbReference type="NCBI Taxonomy" id="224325"/>
    <lineage>
        <taxon>Archaea</taxon>
        <taxon>Methanobacteriati</taxon>
        <taxon>Methanobacteriota</taxon>
        <taxon>Archaeoglobi</taxon>
        <taxon>Archaeoglobales</taxon>
        <taxon>Archaeoglobaceae</taxon>
        <taxon>Archaeoglobus</taxon>
    </lineage>
</organism>
<gene>
    <name type="ordered locus">AF_2001</name>
</gene>
<accession>O28278</accession>
<reference key="1">
    <citation type="journal article" date="1997" name="Nature">
        <title>The complete genome sequence of the hyperthermophilic, sulphate-reducing archaeon Archaeoglobus fulgidus.</title>
        <authorList>
            <person name="Klenk H.-P."/>
            <person name="Clayton R.A."/>
            <person name="Tomb J.-F."/>
            <person name="White O."/>
            <person name="Nelson K.E."/>
            <person name="Ketchum K.A."/>
            <person name="Dodson R.J."/>
            <person name="Gwinn M.L."/>
            <person name="Hickey E.K."/>
            <person name="Peterson J.D."/>
            <person name="Richardson D.L."/>
            <person name="Kerlavage A.R."/>
            <person name="Graham D.E."/>
            <person name="Kyrpides N.C."/>
            <person name="Fleischmann R.D."/>
            <person name="Quackenbush J."/>
            <person name="Lee N.H."/>
            <person name="Sutton G.G."/>
            <person name="Gill S.R."/>
            <person name="Kirkness E.F."/>
            <person name="Dougherty B.A."/>
            <person name="McKenney K."/>
            <person name="Adams M.D."/>
            <person name="Loftus B.J."/>
            <person name="Peterson S.N."/>
            <person name="Reich C.I."/>
            <person name="McNeil L.K."/>
            <person name="Badger J.H."/>
            <person name="Glodek A."/>
            <person name="Zhou L."/>
            <person name="Overbeek R."/>
            <person name="Gocayne J.D."/>
            <person name="Weidman J.F."/>
            <person name="McDonald L.A."/>
            <person name="Utterback T.R."/>
            <person name="Cotton M.D."/>
            <person name="Spriggs T."/>
            <person name="Artiach P."/>
            <person name="Kaine B.P."/>
            <person name="Sykes S.M."/>
            <person name="Sadow P.W."/>
            <person name="D'Andrea K.P."/>
            <person name="Bowman C."/>
            <person name="Fujii C."/>
            <person name="Garland S.A."/>
            <person name="Mason T.M."/>
            <person name="Olsen G.J."/>
            <person name="Fraser C.M."/>
            <person name="Smith H.O."/>
            <person name="Woese C.R."/>
            <person name="Venter J.C."/>
        </authorList>
    </citation>
    <scope>NUCLEOTIDE SEQUENCE [LARGE SCALE GENOMIC DNA]</scope>
    <source>
        <strain>ATCC 49558 / DSM 4304 / JCM 9628 / NBRC 100126 / VC-16</strain>
    </source>
</reference>
<dbReference type="EC" id="2.7.4.3" evidence="1"/>
<dbReference type="EMBL" id="AE000782">
    <property type="protein sequence ID" value="AAB89254.1"/>
    <property type="molecule type" value="Genomic_DNA"/>
</dbReference>
<dbReference type="PIR" id="H69499">
    <property type="entry name" value="H69499"/>
</dbReference>
<dbReference type="RefSeq" id="WP_010879493.1">
    <property type="nucleotide sequence ID" value="NC_000917.1"/>
</dbReference>
<dbReference type="SMR" id="O28278"/>
<dbReference type="STRING" id="224325.AF_2001"/>
<dbReference type="PaxDb" id="224325-AF_2001"/>
<dbReference type="EnsemblBacteria" id="AAB89254">
    <property type="protein sequence ID" value="AAB89254"/>
    <property type="gene ID" value="AF_2001"/>
</dbReference>
<dbReference type="KEGG" id="afu:AF_2001"/>
<dbReference type="eggNOG" id="arCOG01038">
    <property type="taxonomic scope" value="Archaea"/>
</dbReference>
<dbReference type="HOGENOM" id="CLU_079096_0_1_2"/>
<dbReference type="OrthoDB" id="8730at2157"/>
<dbReference type="PhylomeDB" id="O28278"/>
<dbReference type="Proteomes" id="UP000002199">
    <property type="component" value="Chromosome"/>
</dbReference>
<dbReference type="GO" id="GO:0004017">
    <property type="term" value="F:adenylate kinase activity"/>
    <property type="evidence" value="ECO:0007669"/>
    <property type="project" value="UniProtKB-UniRule"/>
</dbReference>
<dbReference type="GO" id="GO:0005524">
    <property type="term" value="F:ATP binding"/>
    <property type="evidence" value="ECO:0007669"/>
    <property type="project" value="UniProtKB-UniRule"/>
</dbReference>
<dbReference type="GO" id="GO:0016887">
    <property type="term" value="F:ATP hydrolysis activity"/>
    <property type="evidence" value="ECO:0007669"/>
    <property type="project" value="InterPro"/>
</dbReference>
<dbReference type="GO" id="GO:0042274">
    <property type="term" value="P:ribosomal small subunit biogenesis"/>
    <property type="evidence" value="ECO:0007669"/>
    <property type="project" value="UniProtKB-UniRule"/>
</dbReference>
<dbReference type="GO" id="GO:0006364">
    <property type="term" value="P:rRNA processing"/>
    <property type="evidence" value="ECO:0007669"/>
    <property type="project" value="UniProtKB-KW"/>
</dbReference>
<dbReference type="Gene3D" id="3.40.50.300">
    <property type="entry name" value="P-loop containing nucleotide triphosphate hydrolases"/>
    <property type="match status" value="1"/>
</dbReference>
<dbReference type="HAMAP" id="MF_00039">
    <property type="entry name" value="Adenylate_kinase_AK6"/>
    <property type="match status" value="1"/>
</dbReference>
<dbReference type="InterPro" id="IPR020618">
    <property type="entry name" value="Adenyl_kinase_AK6"/>
</dbReference>
<dbReference type="InterPro" id="IPR027417">
    <property type="entry name" value="P-loop_NTPase"/>
</dbReference>
<dbReference type="PANTHER" id="PTHR12595:SF0">
    <property type="entry name" value="ADENYLATE KINASE ISOENZYME 6"/>
    <property type="match status" value="1"/>
</dbReference>
<dbReference type="PANTHER" id="PTHR12595">
    <property type="entry name" value="POS9-ACTIVATING FACTOR FAP7-RELATED"/>
    <property type="match status" value="1"/>
</dbReference>
<dbReference type="Pfam" id="PF13238">
    <property type="entry name" value="AAA_18"/>
    <property type="match status" value="1"/>
</dbReference>
<dbReference type="SUPFAM" id="SSF52540">
    <property type="entry name" value="P-loop containing nucleoside triphosphate hydrolases"/>
    <property type="match status" value="1"/>
</dbReference>